<gene>
    <name evidence="4" type="primary">dscB</name>
    <name type="ORF">AFUA_4G11680</name>
</gene>
<proteinExistence type="inferred from homology"/>
<accession>Q4WQ60</accession>
<dbReference type="EC" id="2.3.2.27" evidence="6"/>
<dbReference type="EMBL" id="AAHF01000005">
    <property type="protein sequence ID" value="EAL89624.2"/>
    <property type="molecule type" value="Genomic_DNA"/>
</dbReference>
<dbReference type="RefSeq" id="XP_751662.2">
    <property type="nucleotide sequence ID" value="XM_746569.2"/>
</dbReference>
<dbReference type="STRING" id="330879.Q4WQ60"/>
<dbReference type="EnsemblFungi" id="EAL89624">
    <property type="protein sequence ID" value="EAL89624"/>
    <property type="gene ID" value="AFUA_4G11680"/>
</dbReference>
<dbReference type="GeneID" id="3509703"/>
<dbReference type="KEGG" id="afm:AFUA_4G11680"/>
<dbReference type="VEuPathDB" id="FungiDB:Afu4g11680"/>
<dbReference type="eggNOG" id="KOG4463">
    <property type="taxonomic scope" value="Eukaryota"/>
</dbReference>
<dbReference type="HOGENOM" id="CLU_057574_0_0_1"/>
<dbReference type="InParanoid" id="Q4WQ60"/>
<dbReference type="OMA" id="RYRQFWR"/>
<dbReference type="OrthoDB" id="272778at2759"/>
<dbReference type="UniPathway" id="UPA00143"/>
<dbReference type="Proteomes" id="UP000002530">
    <property type="component" value="Chromosome 4"/>
</dbReference>
<dbReference type="GO" id="GO:0005789">
    <property type="term" value="C:endoplasmic reticulum membrane"/>
    <property type="evidence" value="ECO:0007669"/>
    <property type="project" value="UniProtKB-SubCell"/>
</dbReference>
<dbReference type="GO" id="GO:0016740">
    <property type="term" value="F:transferase activity"/>
    <property type="evidence" value="ECO:0007669"/>
    <property type="project" value="UniProtKB-KW"/>
</dbReference>
<dbReference type="InterPro" id="IPR035952">
    <property type="entry name" value="Rhomboid-like_sf"/>
</dbReference>
<dbReference type="PANTHER" id="PTHR43066">
    <property type="entry name" value="RHOMBOID-RELATED PROTEIN"/>
    <property type="match status" value="1"/>
</dbReference>
<dbReference type="PANTHER" id="PTHR43066:SF21">
    <property type="entry name" value="UBIQUITIN-ASSOCIATED DOMAIN-CONTAINING PROTEIN 2"/>
    <property type="match status" value="1"/>
</dbReference>
<dbReference type="SUPFAM" id="SSF144091">
    <property type="entry name" value="Rhomboid-like"/>
    <property type="match status" value="1"/>
</dbReference>
<sequence>MLTSGLTNAPITKLLLIYTIASSIALSILDIKHLASIHVSPHLWPYAQFWRLATWQLAGFTNSTEALFAAMLAYHLRVVERAWGKRKFATFIISTLPYTSLLPPLLLVLLRPLTLYKLNYLPCGPTATLFALLAQYHAGIPHTFRYRISTSTSTSTSSANRDTDASGRGEGAQGKHLTLLLSDKSTTYLVAAQLALSQFPGMMLPAAVGWVVGVAWRAEVLPVPSARWRVPAWAVGEKEMGRRGTQGGEGGERYEDLRRRLEGEAVAAAAAASGNAGSASEASGQRQRRREGGIMDRLRAL</sequence>
<protein>
    <recommendedName>
        <fullName evidence="4">DSC E3 ubiquitin ligase complex subunit B</fullName>
        <ecNumber evidence="6">2.3.2.27</ecNumber>
    </recommendedName>
    <alternativeName>
        <fullName evidence="4">Defective for SREBP cleavage protein B2</fullName>
    </alternativeName>
    <alternativeName>
        <fullName evidence="4">RING-type E3 ubiquitin transferase dscB</fullName>
    </alternativeName>
    <alternativeName>
        <fullName evidence="4">UBA domain-containing protein dscB</fullName>
    </alternativeName>
</protein>
<reference key="1">
    <citation type="journal article" date="2005" name="Nature">
        <title>Genomic sequence of the pathogenic and allergenic filamentous fungus Aspergillus fumigatus.</title>
        <authorList>
            <person name="Nierman W.C."/>
            <person name="Pain A."/>
            <person name="Anderson M.J."/>
            <person name="Wortman J.R."/>
            <person name="Kim H.S."/>
            <person name="Arroyo J."/>
            <person name="Berriman M."/>
            <person name="Abe K."/>
            <person name="Archer D.B."/>
            <person name="Bermejo C."/>
            <person name="Bennett J.W."/>
            <person name="Bowyer P."/>
            <person name="Chen D."/>
            <person name="Collins M."/>
            <person name="Coulsen R."/>
            <person name="Davies R."/>
            <person name="Dyer P.S."/>
            <person name="Farman M.L."/>
            <person name="Fedorova N."/>
            <person name="Fedorova N.D."/>
            <person name="Feldblyum T.V."/>
            <person name="Fischer R."/>
            <person name="Fosker N."/>
            <person name="Fraser A."/>
            <person name="Garcia J.L."/>
            <person name="Garcia M.J."/>
            <person name="Goble A."/>
            <person name="Goldman G.H."/>
            <person name="Gomi K."/>
            <person name="Griffith-Jones S."/>
            <person name="Gwilliam R."/>
            <person name="Haas B.J."/>
            <person name="Haas H."/>
            <person name="Harris D.E."/>
            <person name="Horiuchi H."/>
            <person name="Huang J."/>
            <person name="Humphray S."/>
            <person name="Jimenez J."/>
            <person name="Keller N."/>
            <person name="Khouri H."/>
            <person name="Kitamoto K."/>
            <person name="Kobayashi T."/>
            <person name="Konzack S."/>
            <person name="Kulkarni R."/>
            <person name="Kumagai T."/>
            <person name="Lafton A."/>
            <person name="Latge J.-P."/>
            <person name="Li W."/>
            <person name="Lord A."/>
            <person name="Lu C."/>
            <person name="Majoros W.H."/>
            <person name="May G.S."/>
            <person name="Miller B.L."/>
            <person name="Mohamoud Y."/>
            <person name="Molina M."/>
            <person name="Monod M."/>
            <person name="Mouyna I."/>
            <person name="Mulligan S."/>
            <person name="Murphy L.D."/>
            <person name="O'Neil S."/>
            <person name="Paulsen I."/>
            <person name="Penalva M.A."/>
            <person name="Pertea M."/>
            <person name="Price C."/>
            <person name="Pritchard B.L."/>
            <person name="Quail M.A."/>
            <person name="Rabbinowitsch E."/>
            <person name="Rawlins N."/>
            <person name="Rajandream M.A."/>
            <person name="Reichard U."/>
            <person name="Renauld H."/>
            <person name="Robson G.D."/>
            <person name="Rodriguez de Cordoba S."/>
            <person name="Rodriguez-Pena J.M."/>
            <person name="Ronning C.M."/>
            <person name="Rutter S."/>
            <person name="Salzberg S.L."/>
            <person name="Sanchez M."/>
            <person name="Sanchez-Ferrero J.C."/>
            <person name="Saunders D."/>
            <person name="Seeger K."/>
            <person name="Squares R."/>
            <person name="Squares S."/>
            <person name="Takeuchi M."/>
            <person name="Tekaia F."/>
            <person name="Turner G."/>
            <person name="Vazquez de Aldana C.R."/>
            <person name="Weidman J."/>
            <person name="White O."/>
            <person name="Woodward J.R."/>
            <person name="Yu J.-H."/>
            <person name="Fraser C.M."/>
            <person name="Galagan J.E."/>
            <person name="Asai K."/>
            <person name="Machida M."/>
            <person name="Hall N."/>
            <person name="Barrell B.G."/>
            <person name="Denning D.W."/>
        </authorList>
    </citation>
    <scope>NUCLEOTIDE SEQUENCE [LARGE SCALE GENOMIC DNA]</scope>
    <source>
        <strain>ATCC MYA-4609 / CBS 101355 / FGSC A1100 / Af293</strain>
    </source>
</reference>
<reference key="2">
    <citation type="journal article" date="2012" name="Eukaryot. Cell">
        <title>Dsc orthologs are required for hypoxia adaptation, triazole drug responses, and fungal virulence in Aspergillus fumigatus.</title>
        <authorList>
            <person name="Willger S.D."/>
            <person name="Cornish E.J."/>
            <person name="Chung D."/>
            <person name="Fleming B.A."/>
            <person name="Lehmann M.M."/>
            <person name="Puttikamonkul S."/>
            <person name="Cramer R.A."/>
        </authorList>
    </citation>
    <scope>FUNCTION</scope>
    <scope>DISRUPTION PHENOTYPE</scope>
</reference>
<organism>
    <name type="scientific">Aspergillus fumigatus (strain ATCC MYA-4609 / CBS 101355 / FGSC A1100 / Af293)</name>
    <name type="common">Neosartorya fumigata</name>
    <dbReference type="NCBI Taxonomy" id="330879"/>
    <lineage>
        <taxon>Eukaryota</taxon>
        <taxon>Fungi</taxon>
        <taxon>Dikarya</taxon>
        <taxon>Ascomycota</taxon>
        <taxon>Pezizomycotina</taxon>
        <taxon>Eurotiomycetes</taxon>
        <taxon>Eurotiomycetidae</taxon>
        <taxon>Eurotiales</taxon>
        <taxon>Aspergillaceae</taxon>
        <taxon>Aspergillus</taxon>
        <taxon>Aspergillus subgen. Fumigati</taxon>
    </lineage>
</organism>
<evidence type="ECO:0000255" key="1"/>
<evidence type="ECO:0000256" key="2">
    <source>
        <dbReference type="SAM" id="MobiDB-lite"/>
    </source>
</evidence>
<evidence type="ECO:0000269" key="3">
    <source>
    </source>
</evidence>
<evidence type="ECO:0000303" key="4">
    <source>
    </source>
</evidence>
<evidence type="ECO:0000305" key="5"/>
<evidence type="ECO:0000305" key="6">
    <source>
    </source>
</evidence>
<name>DSCB_ASPFU</name>
<feature type="chain" id="PRO_0000460154" description="DSC E3 ubiquitin ligase complex subunit B">
    <location>
        <begin position="1"/>
        <end position="301"/>
    </location>
</feature>
<feature type="transmembrane region" description="Helical" evidence="1">
    <location>
        <begin position="9"/>
        <end position="29"/>
    </location>
</feature>
<feature type="transmembrane region" description="Helical" evidence="1">
    <location>
        <begin position="52"/>
        <end position="72"/>
    </location>
</feature>
<feature type="transmembrane region" description="Helical" evidence="1">
    <location>
        <begin position="90"/>
        <end position="110"/>
    </location>
</feature>
<feature type="region of interest" description="Disordered" evidence="2">
    <location>
        <begin position="268"/>
        <end position="301"/>
    </location>
</feature>
<feature type="compositionally biased region" description="Low complexity" evidence="2">
    <location>
        <begin position="268"/>
        <end position="284"/>
    </location>
</feature>
<feature type="compositionally biased region" description="Basic and acidic residues" evidence="2">
    <location>
        <begin position="290"/>
        <end position="301"/>
    </location>
</feature>
<comment type="function">
    <text evidence="3">Component of the DSC E3 ubiquitin ligase complex which is required for the srbA transcriptional activator proteolytic cleavage to release the soluble transcription factor from the membrane in low oxygen or sterol conditions (PubMed:23104569). Required for growth during hypoxia and triazole drug susceptibility, as well as for virulence in a murine model of invasive pulmonary aspergillosis (IPA) (PubMed:23104569).</text>
</comment>
<comment type="catalytic activity">
    <reaction evidence="5">
        <text>S-ubiquitinyl-[E2 ubiquitin-conjugating enzyme]-L-cysteine + [acceptor protein]-L-lysine = [E2 ubiquitin-conjugating enzyme]-L-cysteine + N(6)-ubiquitinyl-[acceptor protein]-L-lysine.</text>
        <dbReference type="EC" id="2.3.2.27"/>
    </reaction>
</comment>
<comment type="pathway">
    <text evidence="6">Protein modification; protein ubiquitination.</text>
</comment>
<comment type="subunit">
    <text evidence="6">Component of the DSC E3 ubiquitin ligase complex composed of dscA, dscB, dscC and dscD.</text>
</comment>
<comment type="subcellular location">
    <subcellularLocation>
        <location evidence="6">Endoplasmic reticulum membrane</location>
        <topology evidence="1">Multi-pass membrane protein</topology>
    </subcellularLocation>
</comment>
<comment type="disruption phenotype">
    <text evidence="3">Impairs growth on solid media under hypoxia and leads to triazole susceptibility (PubMed:23104569). Impairs virulence in a murine model of invasive pulmonary aspergillosis (IPA) (PubMed:23104569).</text>
</comment>
<keyword id="KW-0256">Endoplasmic reticulum</keyword>
<keyword id="KW-0472">Membrane</keyword>
<keyword id="KW-1185">Reference proteome</keyword>
<keyword id="KW-0808">Transferase</keyword>
<keyword id="KW-0812">Transmembrane</keyword>
<keyword id="KW-1133">Transmembrane helix</keyword>
<keyword id="KW-0833">Ubl conjugation pathway</keyword>